<sequence length="119" mass="13725">MTNTKKILHNALYYVLIIIYEYVLLLVHCLRYFFEFLFLFLPLWLVFFFLMLSLNNLSRSYSSSPSSWLPVNSLSLASLFSSSFCSPSSNFLFLEPLSSELSPKVFLPLITPSGFRSSL</sequence>
<reference key="1">
    <citation type="journal article" date="1997" name="Nature">
        <title>The nucleotide sequence of Saccharomyces cerevisiae chromosome XIV and its evolutionary implications.</title>
        <authorList>
            <person name="Philippsen P."/>
            <person name="Kleine K."/>
            <person name="Poehlmann R."/>
            <person name="Duesterhoeft A."/>
            <person name="Hamberg K."/>
            <person name="Hegemann J.H."/>
            <person name="Obermaier B."/>
            <person name="Urrestarazu L.A."/>
            <person name="Aert R."/>
            <person name="Albermann K."/>
            <person name="Altmann R."/>
            <person name="Andre B."/>
            <person name="Baladron V."/>
            <person name="Ballesta J.P.G."/>
            <person name="Becam A.-M."/>
            <person name="Beinhauer J.D."/>
            <person name="Boskovic J."/>
            <person name="Buitrago M.J."/>
            <person name="Bussereau F."/>
            <person name="Coster F."/>
            <person name="Crouzet M."/>
            <person name="D'Angelo M."/>
            <person name="Dal Pero F."/>
            <person name="De Antoni A."/>
            <person name="del Rey F."/>
            <person name="Doignon F."/>
            <person name="Domdey H."/>
            <person name="Dubois E."/>
            <person name="Fiedler T.A."/>
            <person name="Fleig U."/>
            <person name="Floeth M."/>
            <person name="Fritz C."/>
            <person name="Gaillardin C."/>
            <person name="Garcia-Cantalejo J.M."/>
            <person name="Glansdorff N."/>
            <person name="Goffeau A."/>
            <person name="Gueldener U."/>
            <person name="Herbert C.J."/>
            <person name="Heumann K."/>
            <person name="Heuss-Neitzel D."/>
            <person name="Hilbert H."/>
            <person name="Hinni K."/>
            <person name="Iraqui Houssaini I."/>
            <person name="Jacquet M."/>
            <person name="Jimenez A."/>
            <person name="Jonniaux J.-L."/>
            <person name="Karpfinger-Hartl L."/>
            <person name="Lanfranchi G."/>
            <person name="Lepingle A."/>
            <person name="Levesque H."/>
            <person name="Lyck R."/>
            <person name="Maftahi M."/>
            <person name="Mallet L."/>
            <person name="Maurer C.T.C."/>
            <person name="Messenguy F."/>
            <person name="Mewes H.-W."/>
            <person name="Moestl D."/>
            <person name="Nasr F."/>
            <person name="Nicaud J.-M."/>
            <person name="Niedenthal R.K."/>
            <person name="Pandolfo D."/>
            <person name="Pierard A."/>
            <person name="Piravandi E."/>
            <person name="Planta R.J."/>
            <person name="Pohl T.M."/>
            <person name="Purnelle B."/>
            <person name="Rebischung C."/>
            <person name="Remacha M.A."/>
            <person name="Revuelta J.L."/>
            <person name="Rinke M."/>
            <person name="Saiz J.E."/>
            <person name="Sartorello F."/>
            <person name="Scherens B."/>
            <person name="Sen-Gupta M."/>
            <person name="Soler-Mira A."/>
            <person name="Urbanus J.H.M."/>
            <person name="Valle G."/>
            <person name="Van Dyck L."/>
            <person name="Verhasselt P."/>
            <person name="Vierendeels F."/>
            <person name="Vissers S."/>
            <person name="Voet M."/>
            <person name="Volckaert G."/>
            <person name="Wach A."/>
            <person name="Wambutt R."/>
            <person name="Wedler H."/>
            <person name="Zollner A."/>
            <person name="Hani J."/>
        </authorList>
    </citation>
    <scope>NUCLEOTIDE SEQUENCE [LARGE SCALE GENOMIC DNA]</scope>
    <source>
        <strain>ATCC 204508 / S288c</strain>
    </source>
</reference>
<reference key="2">
    <citation type="journal article" date="2014" name="G3 (Bethesda)">
        <title>The reference genome sequence of Saccharomyces cerevisiae: Then and now.</title>
        <authorList>
            <person name="Engel S.R."/>
            <person name="Dietrich F.S."/>
            <person name="Fisk D.G."/>
            <person name="Binkley G."/>
            <person name="Balakrishnan R."/>
            <person name="Costanzo M.C."/>
            <person name="Dwight S.S."/>
            <person name="Hitz B.C."/>
            <person name="Karra K."/>
            <person name="Nash R.S."/>
            <person name="Weng S."/>
            <person name="Wong E.D."/>
            <person name="Lloyd P."/>
            <person name="Skrzypek M.S."/>
            <person name="Miyasato S.R."/>
            <person name="Simison M."/>
            <person name="Cherry J.M."/>
        </authorList>
    </citation>
    <scope>GENOME REANNOTATION</scope>
    <source>
        <strain>ATCC 204508 / S288c</strain>
    </source>
</reference>
<reference key="3">
    <citation type="journal article" date="2007" name="Genome Res.">
        <title>Approaching a complete repository of sequence-verified protein-encoding clones for Saccharomyces cerevisiae.</title>
        <authorList>
            <person name="Hu Y."/>
            <person name="Rolfs A."/>
            <person name="Bhullar B."/>
            <person name="Murthy T.V.S."/>
            <person name="Zhu C."/>
            <person name="Berger M.F."/>
            <person name="Camargo A.A."/>
            <person name="Kelley F."/>
            <person name="McCarron S."/>
            <person name="Jepson D."/>
            <person name="Richardson A."/>
            <person name="Raphael J."/>
            <person name="Moreira D."/>
            <person name="Taycher E."/>
            <person name="Zuo D."/>
            <person name="Mohr S."/>
            <person name="Kane M.F."/>
            <person name="Williamson J."/>
            <person name="Simpson A.J.G."/>
            <person name="Bulyk M.L."/>
            <person name="Harlow E."/>
            <person name="Marsischky G."/>
            <person name="Kolodner R.D."/>
            <person name="LaBaer J."/>
        </authorList>
    </citation>
    <scope>NUCLEOTIDE SEQUENCE [GENOMIC DNA]</scope>
    <source>
        <strain>ATCC 204508 / S288c</strain>
    </source>
</reference>
<gene>
    <name type="ordered locus">YNR025C</name>
    <name type="ORF">N3235</name>
</gene>
<keyword id="KW-0472">Membrane</keyword>
<keyword id="KW-0812">Transmembrane</keyword>
<keyword id="KW-1133">Transmembrane helix</keyword>
<dbReference type="EMBL" id="Z71639">
    <property type="protein sequence ID" value="CAA96304.1"/>
    <property type="molecule type" value="Genomic_DNA"/>
</dbReference>
<dbReference type="EMBL" id="AY693330">
    <property type="protein sequence ID" value="AAT93349.1"/>
    <property type="molecule type" value="Genomic_DNA"/>
</dbReference>
<dbReference type="PIR" id="S63356">
    <property type="entry name" value="S63356"/>
</dbReference>
<dbReference type="SMR" id="P53726"/>
<dbReference type="DIP" id="DIP-1975N"/>
<dbReference type="IntAct" id="P53726">
    <property type="interactions" value="2"/>
</dbReference>
<dbReference type="MINT" id="P53726"/>
<dbReference type="STRING" id="4932.YNR025C"/>
<dbReference type="PaxDb" id="4932-YNR025C"/>
<dbReference type="EnsemblFungi" id="YNR025C_mRNA">
    <property type="protein sequence ID" value="YNR025C"/>
    <property type="gene ID" value="YNR025C"/>
</dbReference>
<dbReference type="AGR" id="SGD:S000005308"/>
<dbReference type="SGD" id="S000005308">
    <property type="gene designation" value="YNR025C"/>
</dbReference>
<dbReference type="HOGENOM" id="CLU_2063312_0_0_1"/>
<dbReference type="GO" id="GO:0016020">
    <property type="term" value="C:membrane"/>
    <property type="evidence" value="ECO:0007669"/>
    <property type="project" value="UniProtKB-SubCell"/>
</dbReference>
<comment type="subcellular location">
    <subcellularLocation>
        <location evidence="2">Membrane</location>
        <topology evidence="2">Multi-pass membrane protein</topology>
    </subcellularLocation>
</comment>
<comment type="miscellaneous">
    <text evidence="2">Partially overlaps YNR024W.</text>
</comment>
<comment type="caution">
    <text evidence="3">Product of a dubious gene prediction unlikely to encode a functional protein. Because of that it is not part of the S.cerevisiae S288c complete/reference proteome set.</text>
</comment>
<name>YN8E_YEAST</name>
<organism>
    <name type="scientific">Saccharomyces cerevisiae (strain ATCC 204508 / S288c)</name>
    <name type="common">Baker's yeast</name>
    <dbReference type="NCBI Taxonomy" id="559292"/>
    <lineage>
        <taxon>Eukaryota</taxon>
        <taxon>Fungi</taxon>
        <taxon>Dikarya</taxon>
        <taxon>Ascomycota</taxon>
        <taxon>Saccharomycotina</taxon>
        <taxon>Saccharomycetes</taxon>
        <taxon>Saccharomycetales</taxon>
        <taxon>Saccharomycetaceae</taxon>
        <taxon>Saccharomyces</taxon>
    </lineage>
</organism>
<feature type="chain" id="PRO_0000203475" description="Putative uncharacterized protein YNR025C">
    <location>
        <begin position="1"/>
        <end position="119"/>
    </location>
</feature>
<feature type="transmembrane region" description="Helical" evidence="1">
    <location>
        <begin position="7"/>
        <end position="27"/>
    </location>
</feature>
<feature type="transmembrane region" description="Helical" evidence="1">
    <location>
        <begin position="32"/>
        <end position="52"/>
    </location>
</feature>
<evidence type="ECO:0000255" key="1"/>
<evidence type="ECO:0000305" key="2"/>
<evidence type="ECO:0000305" key="3">
    <source>
    </source>
</evidence>
<protein>
    <recommendedName>
        <fullName>Putative uncharacterized protein YNR025C</fullName>
    </recommendedName>
</protein>
<proteinExistence type="uncertain"/>
<accession>P53726</accession>